<comment type="function">
    <text>Could be a regulatory protein, possibly participating in receptor-mediated signal transduction at the plasma membrane. Has guanine nucleotide-binding activity but undetectable intrinsic GTPase activity.</text>
</comment>
<comment type="subunit">
    <text evidence="3 4">Interacts with calmodulin in a Ca(2+)-dependent manner. Binds ROCK1.</text>
</comment>
<comment type="interaction">
    <interactant intactId="EBI-744104">
        <id>P55040</id>
    </interactant>
    <interactant intactId="EBI-2371423">
        <id>O43865</id>
        <label>AHCYL1</label>
    </interactant>
    <organismsDiffer>false</organismsDiffer>
    <experiments>8</experiments>
</comment>
<comment type="interaction">
    <interactant intactId="EBI-744104">
        <id>P55040</id>
    </interactant>
    <interactant intactId="EBI-12170453">
        <id>Q8N2N9-4</id>
        <label>ANKRD36B</label>
    </interactant>
    <organismsDiffer>false</organismsDiffer>
    <experiments>3</experiments>
</comment>
<comment type="interaction">
    <interactant intactId="EBI-744104">
        <id>P55040</id>
    </interactant>
    <interactant intactId="EBI-12809012">
        <id>Q8WXK1</id>
        <label>ASB15</label>
    </interactant>
    <organismsDiffer>false</organismsDiffer>
    <experiments>3</experiments>
</comment>
<comment type="interaction">
    <interactant intactId="EBI-744104">
        <id>P55040</id>
    </interactant>
    <interactant intactId="EBI-742722">
        <id>Q9BUH8</id>
        <label>BEGAIN</label>
    </interactant>
    <organismsDiffer>false</organismsDiffer>
    <experiments>5</experiments>
</comment>
<comment type="interaction">
    <interactant intactId="EBI-744104">
        <id>P55040</id>
    </interactant>
    <interactant intactId="EBI-465872">
        <id>Q6QNY1</id>
        <label>BLOC1S2</label>
    </interactant>
    <organismsDiffer>false</organismsDiffer>
    <experiments>3</experiments>
</comment>
<comment type="interaction">
    <interactant intactId="EBI-744104">
        <id>P55040</id>
    </interactant>
    <interactant intactId="EBI-2548012">
        <id>Q9H2G9</id>
        <label>BLZF1</label>
    </interactant>
    <organismsDiffer>false</organismsDiffer>
    <experiments>6</experiments>
</comment>
<comment type="interaction">
    <interactant intactId="EBI-744104">
        <id>P55040</id>
    </interactant>
    <interactant intactId="EBI-17761821">
        <id>Q8NDD1-6</id>
        <label>C1orf131</label>
    </interactant>
    <organismsDiffer>false</organismsDiffer>
    <experiments>3</experiments>
</comment>
<comment type="interaction">
    <interactant intactId="EBI-744104">
        <id>P55040</id>
    </interactant>
    <interactant intactId="EBI-947514">
        <id>Q02641</id>
        <label>CACNB1</label>
    </interactant>
    <organismsDiffer>false</organismsDiffer>
    <experiments>3</experiments>
</comment>
<comment type="interaction">
    <interactant intactId="EBI-744104">
        <id>P55040</id>
    </interactant>
    <interactant intactId="EBI-1184651">
        <id>P54284</id>
        <label>CACNB3</label>
    </interactant>
    <organismsDiffer>false</organismsDiffer>
    <experiments>8</experiments>
</comment>
<comment type="interaction">
    <interactant intactId="EBI-744104">
        <id>P55040</id>
    </interactant>
    <interactant intactId="EBI-11530605">
        <id>Q9H257-2</id>
        <label>CARD9</label>
    </interactant>
    <organismsDiffer>false</organismsDiffer>
    <experiments>3</experiments>
</comment>
<comment type="interaction">
    <interactant intactId="EBI-744104">
        <id>P55040</id>
    </interactant>
    <interactant intactId="EBI-10171570">
        <id>Q68D86</id>
        <label>CCDC102B</label>
    </interactant>
    <organismsDiffer>false</organismsDiffer>
    <experiments>3</experiments>
</comment>
<comment type="interaction">
    <interactant intactId="EBI-744104">
        <id>P55040</id>
    </interactant>
    <interactant intactId="EBI-11977221">
        <id>Q86Z20</id>
        <label>CCDC125</label>
    </interactant>
    <organismsDiffer>false</organismsDiffer>
    <experiments>3</experiments>
</comment>
<comment type="interaction">
    <interactant intactId="EBI-744104">
        <id>P55040</id>
    </interactant>
    <interactant intactId="EBI-347573">
        <id>A6NC98</id>
        <label>CCDC88B</label>
    </interactant>
    <organismsDiffer>false</organismsDiffer>
    <experiments>3</experiments>
</comment>
<comment type="interaction">
    <interactant intactId="EBI-744104">
        <id>P55040</id>
    </interactant>
    <interactant intactId="EBI-1181367">
        <id>Q01850</id>
        <label>CDR2</label>
    </interactant>
    <organismsDiffer>false</organismsDiffer>
    <experiments>3</experiments>
</comment>
<comment type="interaction">
    <interactant intactId="EBI-744104">
        <id>P55040</id>
    </interactant>
    <interactant intactId="EBI-739624">
        <id>Q8NHQ1</id>
        <label>CEP70</label>
    </interactant>
    <organismsDiffer>false</organismsDiffer>
    <experiments>3</experiments>
</comment>
<comment type="interaction">
    <interactant intactId="EBI-744104">
        <id>P55040</id>
    </interactant>
    <interactant intactId="EBI-3866319">
        <id>Q9Y2V7</id>
        <label>COG6</label>
    </interactant>
    <organismsDiffer>false</organismsDiffer>
    <experiments>3</experiments>
</comment>
<comment type="interaction">
    <interactant intactId="EBI-744104">
        <id>P55040</id>
    </interactant>
    <interactant intactId="EBI-720875">
        <id>Q96MW5</id>
        <label>COG8</label>
    </interactant>
    <organismsDiffer>false</organismsDiffer>
    <experiments>3</experiments>
</comment>
<comment type="interaction">
    <interactant intactId="EBI-744104">
        <id>P55040</id>
    </interactant>
    <interactant intactId="EBI-3867333">
        <id>A8MQ03</id>
        <label>CYSRT1</label>
    </interactant>
    <organismsDiffer>false</organismsDiffer>
    <experiments>3</experiments>
</comment>
<comment type="interaction">
    <interactant intactId="EBI-744104">
        <id>P55040</id>
    </interactant>
    <interactant intactId="EBI-12205861">
        <id>Q8NFT6-2</id>
        <label>DBF4B</label>
    </interactant>
    <organismsDiffer>false</organismsDiffer>
    <experiments>3</experiments>
</comment>
<comment type="interaction">
    <interactant intactId="EBI-744104">
        <id>P55040</id>
    </interactant>
    <interactant intactId="EBI-748597">
        <id>Q05D60</id>
        <label>DEUP1</label>
    </interactant>
    <organismsDiffer>false</organismsDiffer>
    <experiments>6</experiments>
</comment>
<comment type="interaction">
    <interactant intactId="EBI-744104">
        <id>P55040</id>
    </interactant>
    <interactant intactId="EBI-11988027">
        <id>Q9NRI5-2</id>
        <label>DISC1</label>
    </interactant>
    <organismsDiffer>false</organismsDiffer>
    <experiments>3</experiments>
</comment>
<comment type="interaction">
    <interactant intactId="EBI-744104">
        <id>P55040</id>
    </interactant>
    <interactant intactId="EBI-712452">
        <id>Q9BQ95</id>
        <label>ECSIT</label>
    </interactant>
    <organismsDiffer>false</organismsDiffer>
    <experiments>3</experiments>
</comment>
<comment type="interaction">
    <interactant intactId="EBI-744104">
        <id>P55040</id>
    </interactant>
    <interactant intactId="EBI-2349927">
        <id>Q5JST6</id>
        <label>EFHC2</label>
    </interactant>
    <organismsDiffer>false</organismsDiffer>
    <experiments>3</experiments>
</comment>
<comment type="interaction">
    <interactant intactId="EBI-744104">
        <id>P55040</id>
    </interactant>
    <interactant intactId="EBI-371922">
        <id>Q96B26</id>
        <label>EXOSC8</label>
    </interactant>
    <organismsDiffer>false</organismsDiffer>
    <experiments>3</experiments>
</comment>
<comment type="interaction">
    <interactant intactId="EBI-744104">
        <id>P55040</id>
    </interactant>
    <interactant intactId="EBI-372506">
        <id>Q8TAE8</id>
        <label>GADD45GIP1</label>
    </interactant>
    <organismsDiffer>false</organismsDiffer>
    <experiments>3</experiments>
</comment>
<comment type="interaction">
    <interactant intactId="EBI-744104">
        <id>P55040</id>
    </interactant>
    <interactant intactId="EBI-1052570">
        <id>O95995</id>
        <label>GAS8</label>
    </interactant>
    <organismsDiffer>false</organismsDiffer>
    <experiments>3</experiments>
</comment>
<comment type="interaction">
    <interactant intactId="EBI-744104">
        <id>P55040</id>
    </interactant>
    <interactant intactId="EBI-618309">
        <id>Q08379</id>
        <label>GOLGA2</label>
    </interactant>
    <organismsDiffer>false</organismsDiffer>
    <experiments>6</experiments>
</comment>
<comment type="interaction">
    <interactant intactId="EBI-744104">
        <id>P55040</id>
    </interactant>
    <interactant intactId="EBI-5916454">
        <id>A6NEM1</id>
        <label>GOLGA6L9</label>
    </interactant>
    <organismsDiffer>false</organismsDiffer>
    <experiments>3</experiments>
</comment>
<comment type="interaction">
    <interactant intactId="EBI-744104">
        <id>P55040</id>
    </interactant>
    <interactant intactId="EBI-11102276">
        <id>Q9HD26-2</id>
        <label>GOPC</label>
    </interactant>
    <organismsDiffer>false</organismsDiffer>
    <experiments>3</experiments>
</comment>
<comment type="interaction">
    <interactant intactId="EBI-744104">
        <id>P55040</id>
    </interactant>
    <interactant intactId="EBI-11519926">
        <id>Q6PI77</id>
        <label>GPRASP3</label>
    </interactant>
    <organismsDiffer>false</organismsDiffer>
    <experiments>3</experiments>
</comment>
<comment type="interaction">
    <interactant intactId="EBI-744104">
        <id>P55040</id>
    </interactant>
    <interactant intactId="EBI-10961706">
        <id>Q96ED9-2</id>
        <label>HOOK2</label>
    </interactant>
    <organismsDiffer>false</organismsDiffer>
    <experiments>3</experiments>
</comment>
<comment type="interaction">
    <interactant intactId="EBI-744104">
        <id>P55040</id>
    </interactant>
    <interactant intactId="EBI-7116203">
        <id>O75031</id>
        <label>HSF2BP</label>
    </interactant>
    <organismsDiffer>false</organismsDiffer>
    <experiments>3</experiments>
</comment>
<comment type="interaction">
    <interactant intactId="EBI-744104">
        <id>P55040</id>
    </interactant>
    <interactant intactId="EBI-8638439">
        <id>Q8IYA8</id>
        <label>IHO1</label>
    </interactant>
    <organismsDiffer>false</organismsDiffer>
    <experiments>3</experiments>
</comment>
<comment type="interaction">
    <interactant intactId="EBI-744104">
        <id>P55040</id>
    </interactant>
    <interactant intactId="EBI-747204">
        <id>Q9UKT9</id>
        <label>IKZF3</label>
    </interactant>
    <organismsDiffer>false</organismsDiffer>
    <experiments>8</experiments>
</comment>
<comment type="interaction">
    <interactant intactId="EBI-744104">
        <id>P55040</id>
    </interactant>
    <interactant intactId="EBI-6509505">
        <id>Q0VD86</id>
        <label>INCA1</label>
    </interactant>
    <organismsDiffer>false</organismsDiffer>
    <experiments>3</experiments>
</comment>
<comment type="interaction">
    <interactant intactId="EBI-744104">
        <id>P55040</id>
    </interactant>
    <interactant intactId="EBI-769401">
        <id>Q8NBZ0</id>
        <label>INO80E</label>
    </interactant>
    <organismsDiffer>false</organismsDiffer>
    <experiments>6</experiments>
</comment>
<comment type="interaction">
    <interactant intactId="EBI-744104">
        <id>P55040</id>
    </interactant>
    <interactant intactId="EBI-12081118">
        <id>Q1MX18</id>
        <label>INSC</label>
    </interactant>
    <organismsDiffer>false</organismsDiffer>
    <experiments>3</experiments>
</comment>
<comment type="interaction">
    <interactant intactId="EBI-744104">
        <id>P55040</id>
    </interactant>
    <interactant intactId="EBI-10258659">
        <id>Q86U28</id>
        <label>ISCA2</label>
    </interactant>
    <organismsDiffer>false</organismsDiffer>
    <experiments>3</experiments>
</comment>
<comment type="interaction">
    <interactant intactId="EBI-744104">
        <id>P55040</id>
    </interactant>
    <interactant intactId="EBI-715394">
        <id>Q9H079</id>
        <label>KATNBL1</label>
    </interactant>
    <organismsDiffer>false</organismsDiffer>
    <experiments>5</experiments>
</comment>
<comment type="interaction">
    <interactant intactId="EBI-744104">
        <id>P55040</id>
    </interactant>
    <interactant intactId="EBI-4397613">
        <id>Q7L273</id>
        <label>KCTD9</label>
    </interactant>
    <organismsDiffer>false</organismsDiffer>
    <experiments>6</experiments>
</comment>
<comment type="interaction">
    <interactant intactId="EBI-744104">
        <id>P55040</id>
    </interactant>
    <interactant intactId="EBI-14069005">
        <id>Q9BVG8-5</id>
        <label>KIFC3</label>
    </interactant>
    <organismsDiffer>false</organismsDiffer>
    <experiments>3</experiments>
</comment>
<comment type="interaction">
    <interactant intactId="EBI-744104">
        <id>P55040</id>
    </interactant>
    <interactant intactId="EBI-948001">
        <id>Q15323</id>
        <label>KRT31</label>
    </interactant>
    <organismsDiffer>false</organismsDiffer>
    <experiments>6</experiments>
</comment>
<comment type="interaction">
    <interactant intactId="EBI-744104">
        <id>P55040</id>
    </interactant>
    <interactant intactId="EBI-1047093">
        <id>O76011</id>
        <label>KRT34</label>
    </interactant>
    <organismsDiffer>false</organismsDiffer>
    <experiments>3</experiments>
</comment>
<comment type="interaction">
    <interactant intactId="EBI-744104">
        <id>P55040</id>
    </interactant>
    <interactant intactId="EBI-11958506">
        <id>O76013-2</id>
        <label>KRT36</label>
    </interactant>
    <organismsDiffer>false</organismsDiffer>
    <experiments>3</experiments>
</comment>
<comment type="interaction">
    <interactant intactId="EBI-744104">
        <id>P55040</id>
    </interactant>
    <interactant intactId="EBI-10171697">
        <id>Q6A162</id>
        <label>KRT40</label>
    </interactant>
    <organismsDiffer>false</organismsDiffer>
    <experiments>3</experiments>
</comment>
<comment type="interaction">
    <interactant intactId="EBI-744104">
        <id>P55040</id>
    </interactant>
    <interactant intactId="EBI-702198">
        <id>P02538</id>
        <label>KRT6A</label>
    </interactant>
    <organismsDiffer>false</organismsDiffer>
    <experiments>3</experiments>
</comment>
<comment type="interaction">
    <interactant intactId="EBI-744104">
        <id>P55040</id>
    </interactant>
    <interactant intactId="EBI-10221390">
        <id>P78385</id>
        <label>KRT83</label>
    </interactant>
    <organismsDiffer>false</organismsDiffer>
    <experiments>3</experiments>
</comment>
<comment type="interaction">
    <interactant intactId="EBI-744104">
        <id>P55040</id>
    </interactant>
    <interactant intactId="EBI-10172290">
        <id>P60409</id>
        <label>KRTAP10-7</label>
    </interactant>
    <organismsDiffer>false</organismsDiffer>
    <experiments>6</experiments>
</comment>
<comment type="interaction">
    <interactant intactId="EBI-744104">
        <id>P55040</id>
    </interactant>
    <interactant intactId="EBI-10171774">
        <id>P60410</id>
        <label>KRTAP10-8</label>
    </interactant>
    <organismsDiffer>false</organismsDiffer>
    <experiments>3</experiments>
</comment>
<comment type="interaction">
    <interactant intactId="EBI-744104">
        <id>P55040</id>
    </interactant>
    <interactant intactId="EBI-12864460">
        <id>P48059-3</id>
        <label>LIMS1</label>
    </interactant>
    <organismsDiffer>false</organismsDiffer>
    <experiments>3</experiments>
</comment>
<comment type="interaction">
    <interactant intactId="EBI-744104">
        <id>P55040</id>
    </interactant>
    <interactant intactId="EBI-18273118">
        <id>Q9P2M1</id>
        <label>LRP2BP</label>
    </interactant>
    <organismsDiffer>false</organismsDiffer>
    <experiments>3</experiments>
</comment>
<comment type="interaction">
    <interactant intactId="EBI-744104">
        <id>P55040</id>
    </interactant>
    <interactant intactId="EBI-741037">
        <id>Q9BRK4</id>
        <label>LZTS2</label>
    </interactant>
    <organismsDiffer>false</organismsDiffer>
    <experiments>6</experiments>
</comment>
<comment type="interaction">
    <interactant intactId="EBI-744104">
        <id>P55040</id>
    </interactant>
    <interactant intactId="EBI-348259">
        <id>Q96EZ8</id>
        <label>MCRS1</label>
    </interactant>
    <organismsDiffer>false</organismsDiffer>
    <experiments>3</experiments>
</comment>
<comment type="interaction">
    <interactant intactId="EBI-744104">
        <id>P55040</id>
    </interactant>
    <interactant intactId="EBI-6165891">
        <id>Q14696</id>
        <label>MESD</label>
    </interactant>
    <organismsDiffer>false</organismsDiffer>
    <experiments>3</experiments>
</comment>
<comment type="interaction">
    <interactant intactId="EBI-744104">
        <id>P55040</id>
    </interactant>
    <interactant intactId="EBI-12866138">
        <id>A0A0C4DFN3</id>
        <label>MGLL</label>
    </interactant>
    <organismsDiffer>false</organismsDiffer>
    <experiments>3</experiments>
</comment>
<comment type="interaction">
    <interactant intactId="EBI-744104">
        <id>P55040</id>
    </interactant>
    <interactant intactId="EBI-10172526">
        <id>Q9UJV3-2</id>
        <label>MID2</label>
    </interactant>
    <organismsDiffer>false</organismsDiffer>
    <experiments>4</experiments>
</comment>
<comment type="interaction">
    <interactant intactId="EBI-744104">
        <id>P55040</id>
    </interactant>
    <interactant intactId="EBI-2548751">
        <id>Q8TD10</id>
        <label>MIPOL1</label>
    </interactant>
    <organismsDiffer>false</organismsDiffer>
    <experiments>3</experiments>
</comment>
<comment type="interaction">
    <interactant intactId="EBI-744104">
        <id>P55040</id>
    </interactant>
    <interactant intactId="EBI-2340269">
        <id>Q13064</id>
        <label>MKRN3</label>
    </interactant>
    <organismsDiffer>false</organismsDiffer>
    <experiments>3</experiments>
</comment>
<comment type="interaction">
    <interactant intactId="EBI-744104">
        <id>P55040</id>
    </interactant>
    <interactant intactId="EBI-9675802">
        <id>Q6PF18</id>
        <label>MORN3</label>
    </interactant>
    <organismsDiffer>false</organismsDiffer>
    <experiments>3</experiments>
</comment>
<comment type="interaction">
    <interactant intactId="EBI-744104">
        <id>P55040</id>
    </interactant>
    <interactant intactId="EBI-11599933">
        <id>Q4VC12</id>
        <label>MSS51</label>
    </interactant>
    <organismsDiffer>false</organismsDiffer>
    <experiments>3</experiments>
</comment>
<comment type="interaction">
    <interactant intactId="EBI-744104">
        <id>P55040</id>
    </interactant>
    <interactant intactId="EBI-11522433">
        <id>Q5JR59-3</id>
        <label>MTUS2</label>
    </interactant>
    <organismsDiffer>false</organismsDiffer>
    <experiments>6</experiments>
</comment>
<comment type="interaction">
    <interactant intactId="EBI-744104">
        <id>P55040</id>
    </interactant>
    <interactant intactId="EBI-3906629">
        <id>P15173</id>
        <label>MYOG</label>
    </interactant>
    <organismsDiffer>false</organismsDiffer>
    <experiments>3</experiments>
</comment>
<comment type="interaction">
    <interactant intactId="EBI-744104">
        <id>P55040</id>
    </interactant>
    <interactant intactId="EBI-1246238">
        <id>P17568</id>
        <label>NDUFB7</label>
    </interactant>
    <organismsDiffer>false</organismsDiffer>
    <experiments>3</experiments>
</comment>
<comment type="interaction">
    <interactant intactId="EBI-744104">
        <id>P55040</id>
    </interactant>
    <interactant intactId="EBI-945833">
        <id>Q7Z3S9</id>
        <label>NOTCH2NLA</label>
    </interactant>
    <organismsDiffer>false</organismsDiffer>
    <experiments>3</experiments>
</comment>
<comment type="interaction">
    <interactant intactId="EBI-744104">
        <id>P55040</id>
    </interactant>
    <interactant intactId="EBI-536879">
        <id>O43482</id>
        <label>OIP5</label>
    </interactant>
    <organismsDiffer>false</organismsDiffer>
    <experiments>3</experiments>
</comment>
<comment type="interaction">
    <interactant intactId="EBI-744104">
        <id>P55040</id>
    </interactant>
    <interactant intactId="EBI-10302990">
        <id>Q9BYU1</id>
        <label>PBX4</label>
    </interactant>
    <organismsDiffer>false</organismsDiffer>
    <experiments>3</experiments>
</comment>
<comment type="interaction">
    <interactant intactId="EBI-744104">
        <id>P55040</id>
    </interactant>
    <interactant intactId="EBI-350517">
        <id>Q9NR12</id>
        <label>PDLIM7</label>
    </interactant>
    <organismsDiffer>false</organismsDiffer>
    <experiments>5</experiments>
</comment>
<comment type="interaction">
    <interactant intactId="EBI-744104">
        <id>P55040</id>
    </interactant>
    <interactant intactId="EBI-357318">
        <id>Q9NWS0</id>
        <label>PIH1D1</label>
    </interactant>
    <organismsDiffer>false</organismsDiffer>
    <experiments>3</experiments>
</comment>
<comment type="interaction">
    <interactant intactId="EBI-744104">
        <id>P55040</id>
    </interactant>
    <interactant intactId="EBI-2876622">
        <id>Q9UPG8</id>
        <label>PLAGL2</label>
    </interactant>
    <organismsDiffer>false</organismsDiffer>
    <experiments>3</experiments>
</comment>
<comment type="interaction">
    <interactant intactId="EBI-744104">
        <id>P55040</id>
    </interactant>
    <interactant intactId="EBI-742388">
        <id>Q9H8W4</id>
        <label>PLEKHF2</label>
    </interactant>
    <organismsDiffer>false</organismsDiffer>
    <experiments>3</experiments>
</comment>
<comment type="interaction">
    <interactant intactId="EBI-744104">
        <id>P55040</id>
    </interactant>
    <interactant intactId="EBI-302345">
        <id>Q8ND90</id>
        <label>PNMA1</label>
    </interactant>
    <organismsDiffer>false</organismsDiffer>
    <experiments>3</experiments>
</comment>
<comment type="interaction">
    <interactant intactId="EBI-744104">
        <id>P55040</id>
    </interactant>
    <interactant intactId="EBI-11986735">
        <id>Q8WVV4-1</id>
        <label>POF1B</label>
    </interactant>
    <organismsDiffer>false</organismsDiffer>
    <experiments>3</experiments>
</comment>
<comment type="interaction">
    <interactant intactId="EBI-744104">
        <id>P55040</id>
    </interactant>
    <interactant intactId="EBI-3957793">
        <id>Q9GZV8</id>
        <label>PRDM14</label>
    </interactant>
    <organismsDiffer>false</organismsDiffer>
    <experiments>3</experiments>
</comment>
<comment type="interaction">
    <interactant intactId="EBI-744104">
        <id>P55040</id>
    </interactant>
    <interactant intactId="EBI-11320284">
        <id>Q9NQX0</id>
        <label>PRDM6</label>
    </interactant>
    <organismsDiffer>false</organismsDiffer>
    <experiments>3</experiments>
</comment>
<comment type="interaction">
    <interactant intactId="EBI-744104">
        <id>P55040</id>
    </interactant>
    <interactant intactId="EBI-747225">
        <id>Q59EK9</id>
        <label>RUNDC3A</label>
    </interactant>
    <organismsDiffer>false</organismsDiffer>
    <experiments>3</experiments>
</comment>
<comment type="interaction">
    <interactant intactId="EBI-744104">
        <id>P55040</id>
    </interactant>
    <interactant intactId="EBI-12854506">
        <id>O60641-3</id>
        <label>SNAP91</label>
    </interactant>
    <organismsDiffer>false</organismsDiffer>
    <experiments>3</experiments>
</comment>
<comment type="interaction">
    <interactant intactId="EBI-744104">
        <id>P55040</id>
    </interactant>
    <interactant intactId="EBI-741237">
        <id>O60504</id>
        <label>SORBS3</label>
    </interactant>
    <organismsDiffer>false</organismsDiffer>
    <experiments>3</experiments>
</comment>
<comment type="interaction">
    <interactant intactId="EBI-744104">
        <id>P55040</id>
    </interactant>
    <interactant intactId="EBI-413317">
        <id>Q96R06</id>
        <label>SPAG5</label>
    </interactant>
    <organismsDiffer>false</organismsDiffer>
    <experiments>3</experiments>
</comment>
<comment type="interaction">
    <interactant intactId="EBI-744104">
        <id>P55040</id>
    </interactant>
    <interactant intactId="EBI-17860101">
        <id>Q9NWH7-2</id>
        <label>SPATA6</label>
    </interactant>
    <organismsDiffer>false</organismsDiffer>
    <experiments>3</experiments>
</comment>
<comment type="interaction">
    <interactant intactId="EBI-744104">
        <id>P55040</id>
    </interactant>
    <interactant intactId="EBI-2212028">
        <id>Q9Y2D8</id>
        <label>SSX2IP</label>
    </interactant>
    <organismsDiffer>false</organismsDiffer>
    <experiments>3</experiments>
</comment>
<comment type="interaction">
    <interactant intactId="EBI-744104">
        <id>P55040</id>
    </interactant>
    <interactant intactId="EBI-13092532">
        <id>Q6DHY5</id>
        <label>TBC1D3G</label>
    </interactant>
    <organismsDiffer>false</organismsDiffer>
    <experiments>3</experiments>
</comment>
<comment type="interaction">
    <interactant intactId="EBI-744104">
        <id>P55040</id>
    </interactant>
    <interactant intactId="EBI-533224">
        <id>P15884</id>
        <label>TCF4</label>
    </interactant>
    <organismsDiffer>false</organismsDiffer>
    <experiments>3</experiments>
</comment>
<comment type="interaction">
    <interactant intactId="EBI-744104">
        <id>P55040</id>
    </interactant>
    <interactant intactId="EBI-2514218">
        <id>Q01664</id>
        <label>TFAP4</label>
    </interactant>
    <organismsDiffer>false</organismsDiffer>
    <experiments>2</experiments>
</comment>
<comment type="interaction">
    <interactant intactId="EBI-744104">
        <id>P55040</id>
    </interactant>
    <interactant intactId="EBI-1105213">
        <id>Q9UBB9</id>
        <label>TFIP11</label>
    </interactant>
    <organismsDiffer>false</organismsDiffer>
    <experiments>7</experiments>
</comment>
<comment type="interaction">
    <interactant intactId="EBI-744104">
        <id>P55040</id>
    </interactant>
    <interactant intactId="EBI-12029034">
        <id>Q96PF1</id>
        <label>TGM7</label>
    </interactant>
    <organismsDiffer>false</organismsDiffer>
    <experiments>3</experiments>
</comment>
<comment type="interaction">
    <interactant intactId="EBI-744104">
        <id>P55040</id>
    </interactant>
    <interactant intactId="EBI-11741437">
        <id>Q08117-2</id>
        <label>TLE5</label>
    </interactant>
    <organismsDiffer>false</organismsDiffer>
    <experiments>3</experiments>
</comment>
<comment type="interaction">
    <interactant intactId="EBI-744104">
        <id>P55040</id>
    </interactant>
    <interactant intactId="EBI-11952721">
        <id>Q05BL1</id>
        <label>TP53BP2</label>
    </interactant>
    <organismsDiffer>false</organismsDiffer>
    <experiments>3</experiments>
</comment>
<comment type="interaction">
    <interactant intactId="EBI-744104">
        <id>P55040</id>
    </interactant>
    <interactant intactId="EBI-359224">
        <id>Q13077</id>
        <label>TRAF1</label>
    </interactant>
    <organismsDiffer>false</organismsDiffer>
    <experiments>6</experiments>
</comment>
<comment type="interaction">
    <interactant intactId="EBI-744104">
        <id>P55040</id>
    </interactant>
    <interactant intactId="EBI-355744">
        <id>Q12933</id>
        <label>TRAF2</label>
    </interactant>
    <organismsDiffer>false</organismsDiffer>
    <experiments>3</experiments>
</comment>
<comment type="interaction">
    <interactant intactId="EBI-744104">
        <id>P55040</id>
    </interactant>
    <interactant intactId="EBI-11981577">
        <id>Q9UDY6-2</id>
        <label>TRIM10</label>
    </interactant>
    <organismsDiffer>false</organismsDiffer>
    <experiments>3</experiments>
</comment>
<comment type="interaction">
    <interactant intactId="EBI-744104">
        <id>P55040</id>
    </interactant>
    <interactant intactId="EBI-740098">
        <id>P36406</id>
        <label>TRIM23</label>
    </interactant>
    <organismsDiffer>false</organismsDiffer>
    <experiments>7</experiments>
</comment>
<comment type="interaction">
    <interactant intactId="EBI-744104">
        <id>P55040</id>
    </interactant>
    <interactant intactId="EBI-719493">
        <id>P14373</id>
        <label>TRIM27</label>
    </interactant>
    <organismsDiffer>false</organismsDiffer>
    <experiments>6</experiments>
</comment>
<comment type="interaction">
    <interactant intactId="EBI-744104">
        <id>P55040</id>
    </interactant>
    <interactant intactId="EBI-742790">
        <id>Q13049</id>
        <label>TRIM32</label>
    </interactant>
    <organismsDiffer>false</organismsDiffer>
    <experiments>3</experiments>
</comment>
<comment type="interaction">
    <interactant intactId="EBI-744104">
        <id>P55040</id>
    </interactant>
    <interactant intactId="EBI-2130429">
        <id>Q9BYV2</id>
        <label>TRIM54</label>
    </interactant>
    <organismsDiffer>false</organismsDiffer>
    <experiments>3</experiments>
</comment>
<comment type="interaction">
    <interactant intactId="EBI-744104">
        <id>P55040</id>
    </interactant>
    <interactant intactId="EBI-11525489">
        <id>Q86WT6-2</id>
        <label>TRIM69</label>
    </interactant>
    <organismsDiffer>false</organismsDiffer>
    <experiments>3</experiments>
</comment>
<comment type="interaction">
    <interactant intactId="EBI-744104">
        <id>P55040</id>
    </interactant>
    <interactant intactId="EBI-8601749">
        <id>Q495M9</id>
        <label>USH1G</label>
    </interactant>
    <organismsDiffer>false</organismsDiffer>
    <experiments>3</experiments>
</comment>
<comment type="interaction">
    <interactant intactId="EBI-744104">
        <id>P55040</id>
    </interactant>
    <interactant intactId="EBI-739895">
        <id>Q8N6Y0</id>
        <label>USHBP1</label>
    </interactant>
    <organismsDiffer>false</organismsDiffer>
    <experiments>3</experiments>
</comment>
<comment type="interaction">
    <interactant intactId="EBI-744104">
        <id>P55040</id>
    </interactant>
    <interactant intactId="EBI-353844">
        <id>P08670</id>
        <label>VIM</label>
    </interactant>
    <organismsDiffer>false</organismsDiffer>
    <experiments>3</experiments>
</comment>
<comment type="interaction">
    <interactant intactId="EBI-744104">
        <id>P55040</id>
    </interactant>
    <interactant intactId="EBI-12146727">
        <id>Q9UK41-2</id>
        <label>VPS28</label>
    </interactant>
    <organismsDiffer>false</organismsDiffer>
    <experiments>3</experiments>
</comment>
<comment type="interaction">
    <interactant intactId="EBI-744104">
        <id>P55040</id>
    </interactant>
    <interactant intactId="EBI-2799833">
        <id>Q8N1B4</id>
        <label>VPS52</label>
    </interactant>
    <organismsDiffer>false</organismsDiffer>
    <experiments>3</experiments>
</comment>
<comment type="interaction">
    <interactant intactId="EBI-744104">
        <id>P55040</id>
    </interactant>
    <interactant intactId="EBI-12040603">
        <id>Q9NZC7-5</id>
        <label>WWOX</label>
    </interactant>
    <organismsDiffer>false</organismsDiffer>
    <experiments>3</experiments>
</comment>
<comment type="interaction">
    <interactant intactId="EBI-744104">
        <id>P55040</id>
    </interactant>
    <interactant intactId="EBI-359815">
        <id>P31946</id>
        <label>YWHAB</label>
    </interactant>
    <organismsDiffer>false</organismsDiffer>
    <experiments>4</experiments>
</comment>
<comment type="interaction">
    <interactant intactId="EBI-744104">
        <id>P55040</id>
    </interactant>
    <interactant intactId="EBI-12287587">
        <id>B2RXF5</id>
        <label>ZBTB42</label>
    </interactant>
    <organismsDiffer>false</organismsDiffer>
    <experiments>3</experiments>
</comment>
<comment type="interaction">
    <interactant intactId="EBI-744104">
        <id>P55040</id>
    </interactant>
    <interactant intactId="EBI-747993">
        <id>Q9NQZ6</id>
        <label>ZC4H2</label>
    </interactant>
    <organismsDiffer>false</organismsDiffer>
    <experiments>3</experiments>
</comment>
<comment type="interaction">
    <interactant intactId="EBI-744104">
        <id>P55040</id>
    </interactant>
    <interactant intactId="EBI-7850213">
        <id>Q9UDW3</id>
        <label>ZMAT5</label>
    </interactant>
    <organismsDiffer>false</organismsDiffer>
    <experiments>3</experiments>
</comment>
<comment type="interaction">
    <interactant intactId="EBI-744104">
        <id>P55040</id>
    </interactant>
    <interactant intactId="EBI-717634">
        <id>P17024</id>
        <label>ZNF20</label>
    </interactant>
    <organismsDiffer>false</organismsDiffer>
    <experiments>3</experiments>
</comment>
<comment type="interaction">
    <interactant intactId="EBI-744104">
        <id>P55040</id>
    </interactant>
    <interactant intactId="EBI-2555731">
        <id>Q9H707</id>
        <label>ZNF552</label>
    </interactant>
    <organismsDiffer>false</organismsDiffer>
    <experiments>3</experiments>
</comment>
<comment type="interaction">
    <interactant intactId="EBI-744104">
        <id>P55040</id>
    </interactant>
    <interactant intactId="EBI-625509">
        <id>Q8N720</id>
        <label>ZNF655</label>
    </interactant>
    <organismsDiffer>false</organismsDiffer>
    <experiments>3</experiments>
</comment>
<comment type="interaction">
    <interactant intactId="EBI-744104">
        <id>P55040</id>
    </interactant>
    <interactant intactId="EBI-4395732">
        <id>P0C7X2</id>
        <label>ZNF688</label>
    </interactant>
    <organismsDiffer>false</organismsDiffer>
    <experiments>3</experiments>
</comment>
<comment type="interaction">
    <interactant intactId="EBI-744104">
        <id>P55040</id>
    </interactant>
    <interactant intactId="EBI-10251462">
        <id>Q6NX45</id>
        <label>ZNF774</label>
    </interactant>
    <organismsDiffer>false</organismsDiffer>
    <experiments>3</experiments>
</comment>
<comment type="interaction">
    <interactant intactId="EBI-744104">
        <id>P55040</id>
    </interactant>
    <interactant intactId="EBI-527853">
        <id>Q9UGI0</id>
        <label>ZRANB1</label>
    </interactant>
    <organismsDiffer>false</organismsDiffer>
    <experiments>3</experiments>
</comment>
<comment type="interaction">
    <interactant intactId="EBI-744104">
        <id>P55040</id>
    </interactant>
    <interactant intactId="EBI-751531">
        <id>O15535</id>
        <label>ZSCAN9</label>
    </interactant>
    <organismsDiffer>false</organismsDiffer>
    <experiments>3</experiments>
</comment>
<comment type="interaction">
    <interactant intactId="EBI-744104">
        <id>P55040</id>
    </interactant>
    <interactant intactId="EBI-15685548">
        <id>P27884</id>
        <label>CACNA1A</label>
    </interactant>
    <organismsDiffer>true</organismsDiffer>
    <experiments>2</experiments>
</comment>
<comment type="interaction">
    <interactant intactId="EBI-744104">
        <id>P55040</id>
    </interactant>
    <interactant intactId="EBI-8028596">
        <id>P54287</id>
        <label>Cacnb3</label>
    </interactant>
    <organismsDiffer>true</organismsDiffer>
    <experiments>2</experiments>
</comment>
<comment type="subcellular location">
    <subcellularLocation>
        <location>Cell membrane</location>
        <topology>Peripheral membrane protein</topology>
        <orientation>Cytoplasmic side</orientation>
    </subcellularLocation>
</comment>
<comment type="tissue specificity">
    <text>Most abundant in thymus, spleen, kidney, lung, and testis. Less abundant in heart, brain, liver and skeletal muscle.</text>
</comment>
<comment type="induction">
    <text>By mitogens.</text>
</comment>
<comment type="PTM">
    <text>Phosphorylated on tyrosine residues.</text>
</comment>
<comment type="similarity">
    <text evidence="5">Belongs to the small GTPase superfamily. RGK family.</text>
</comment>
<organism>
    <name type="scientific">Homo sapiens</name>
    <name type="common">Human</name>
    <dbReference type="NCBI Taxonomy" id="9606"/>
    <lineage>
        <taxon>Eukaryota</taxon>
        <taxon>Metazoa</taxon>
        <taxon>Chordata</taxon>
        <taxon>Craniata</taxon>
        <taxon>Vertebrata</taxon>
        <taxon>Euteleostomi</taxon>
        <taxon>Mammalia</taxon>
        <taxon>Eutheria</taxon>
        <taxon>Euarchontoglires</taxon>
        <taxon>Primates</taxon>
        <taxon>Haplorrhini</taxon>
        <taxon>Catarrhini</taxon>
        <taxon>Hominidae</taxon>
        <taxon>Homo</taxon>
    </lineage>
</organism>
<reference key="1">
    <citation type="journal article" date="1994" name="Science">
        <title>Gem: an induced, immediate early protein belonging to the Ras family.</title>
        <authorList>
            <person name="Maguire J."/>
            <person name="Santoro T."/>
            <person name="Jensen P."/>
            <person name="Siebenlist U."/>
            <person name="Yewdell J."/>
            <person name="Kelly K."/>
        </authorList>
    </citation>
    <scope>NUCLEOTIDE SEQUENCE [MRNA]</scope>
    <source>
        <tissue>Peripheral blood</tissue>
    </source>
</reference>
<reference key="2">
    <citation type="journal article" date="1994" name="Proc. Natl. Acad. Sci. U.S.A.">
        <title>Transcriptional activation of a ras-like gene (kir) by oncogenic tyrosine kinases.</title>
        <authorList>
            <person name="Cohen L."/>
            <person name="Mohr R."/>
            <person name="Chen Y.-Y."/>
            <person name="Huang M."/>
            <person name="Kato R."/>
            <person name="Dorin D."/>
            <person name="Tamanoi F."/>
            <person name="Goga A."/>
            <person name="Afar D."/>
            <person name="Rosenberg N."/>
            <person name="Witte O."/>
        </authorList>
    </citation>
    <scope>NUCLEOTIDE SEQUENCE [MRNA]</scope>
</reference>
<reference key="3">
    <citation type="journal article" date="2004" name="Nat. Genet.">
        <title>Complete sequencing and characterization of 21,243 full-length human cDNAs.</title>
        <authorList>
            <person name="Ota T."/>
            <person name="Suzuki Y."/>
            <person name="Nishikawa T."/>
            <person name="Otsuki T."/>
            <person name="Sugiyama T."/>
            <person name="Irie R."/>
            <person name="Wakamatsu A."/>
            <person name="Hayashi K."/>
            <person name="Sato H."/>
            <person name="Nagai K."/>
            <person name="Kimura K."/>
            <person name="Makita H."/>
            <person name="Sekine M."/>
            <person name="Obayashi M."/>
            <person name="Nishi T."/>
            <person name="Shibahara T."/>
            <person name="Tanaka T."/>
            <person name="Ishii S."/>
            <person name="Yamamoto J."/>
            <person name="Saito K."/>
            <person name="Kawai Y."/>
            <person name="Isono Y."/>
            <person name="Nakamura Y."/>
            <person name="Nagahari K."/>
            <person name="Murakami K."/>
            <person name="Yasuda T."/>
            <person name="Iwayanagi T."/>
            <person name="Wagatsuma M."/>
            <person name="Shiratori A."/>
            <person name="Sudo H."/>
            <person name="Hosoiri T."/>
            <person name="Kaku Y."/>
            <person name="Kodaira H."/>
            <person name="Kondo H."/>
            <person name="Sugawara M."/>
            <person name="Takahashi M."/>
            <person name="Kanda K."/>
            <person name="Yokoi T."/>
            <person name="Furuya T."/>
            <person name="Kikkawa E."/>
            <person name="Omura Y."/>
            <person name="Abe K."/>
            <person name="Kamihara K."/>
            <person name="Katsuta N."/>
            <person name="Sato K."/>
            <person name="Tanikawa M."/>
            <person name="Yamazaki M."/>
            <person name="Ninomiya K."/>
            <person name="Ishibashi T."/>
            <person name="Yamashita H."/>
            <person name="Murakawa K."/>
            <person name="Fujimori K."/>
            <person name="Tanai H."/>
            <person name="Kimata M."/>
            <person name="Watanabe M."/>
            <person name="Hiraoka S."/>
            <person name="Chiba Y."/>
            <person name="Ishida S."/>
            <person name="Ono Y."/>
            <person name="Takiguchi S."/>
            <person name="Watanabe S."/>
            <person name="Yosida M."/>
            <person name="Hotuta T."/>
            <person name="Kusano J."/>
            <person name="Kanehori K."/>
            <person name="Takahashi-Fujii A."/>
            <person name="Hara H."/>
            <person name="Tanase T.-O."/>
            <person name="Nomura Y."/>
            <person name="Togiya S."/>
            <person name="Komai F."/>
            <person name="Hara R."/>
            <person name="Takeuchi K."/>
            <person name="Arita M."/>
            <person name="Imose N."/>
            <person name="Musashino K."/>
            <person name="Yuuki H."/>
            <person name="Oshima A."/>
            <person name="Sasaki N."/>
            <person name="Aotsuka S."/>
            <person name="Yoshikawa Y."/>
            <person name="Matsunawa H."/>
            <person name="Ichihara T."/>
            <person name="Shiohata N."/>
            <person name="Sano S."/>
            <person name="Moriya S."/>
            <person name="Momiyama H."/>
            <person name="Satoh N."/>
            <person name="Takami S."/>
            <person name="Terashima Y."/>
            <person name="Suzuki O."/>
            <person name="Nakagawa S."/>
            <person name="Senoh A."/>
            <person name="Mizoguchi H."/>
            <person name="Goto Y."/>
            <person name="Shimizu F."/>
            <person name="Wakebe H."/>
            <person name="Hishigaki H."/>
            <person name="Watanabe T."/>
            <person name="Sugiyama A."/>
            <person name="Takemoto M."/>
            <person name="Kawakami B."/>
            <person name="Yamazaki M."/>
            <person name="Watanabe K."/>
            <person name="Kumagai A."/>
            <person name="Itakura S."/>
            <person name="Fukuzumi Y."/>
            <person name="Fujimori Y."/>
            <person name="Komiyama M."/>
            <person name="Tashiro H."/>
            <person name="Tanigami A."/>
            <person name="Fujiwara T."/>
            <person name="Ono T."/>
            <person name="Yamada K."/>
            <person name="Fujii Y."/>
            <person name="Ozaki K."/>
            <person name="Hirao M."/>
            <person name="Ohmori Y."/>
            <person name="Kawabata A."/>
            <person name="Hikiji T."/>
            <person name="Kobatake N."/>
            <person name="Inagaki H."/>
            <person name="Ikema Y."/>
            <person name="Okamoto S."/>
            <person name="Okitani R."/>
            <person name="Kawakami T."/>
            <person name="Noguchi S."/>
            <person name="Itoh T."/>
            <person name="Shigeta K."/>
            <person name="Senba T."/>
            <person name="Matsumura K."/>
            <person name="Nakajima Y."/>
            <person name="Mizuno T."/>
            <person name="Morinaga M."/>
            <person name="Sasaki M."/>
            <person name="Togashi T."/>
            <person name="Oyama M."/>
            <person name="Hata H."/>
            <person name="Watanabe M."/>
            <person name="Komatsu T."/>
            <person name="Mizushima-Sugano J."/>
            <person name="Satoh T."/>
            <person name="Shirai Y."/>
            <person name="Takahashi Y."/>
            <person name="Nakagawa K."/>
            <person name="Okumura K."/>
            <person name="Nagase T."/>
            <person name="Nomura N."/>
            <person name="Kikuchi H."/>
            <person name="Masuho Y."/>
            <person name="Yamashita R."/>
            <person name="Nakai K."/>
            <person name="Yada T."/>
            <person name="Nakamura Y."/>
            <person name="Ohara O."/>
            <person name="Isogai T."/>
            <person name="Sugano S."/>
        </authorList>
    </citation>
    <scope>NUCLEOTIDE SEQUENCE [LARGE SCALE MRNA]</scope>
    <source>
        <tissue>Amygdala</tissue>
    </source>
</reference>
<reference key="4">
    <citation type="submission" date="2005-07" db="EMBL/GenBank/DDBJ databases">
        <authorList>
            <person name="Mural R.J."/>
            <person name="Istrail S."/>
            <person name="Sutton G.G."/>
            <person name="Florea L."/>
            <person name="Halpern A.L."/>
            <person name="Mobarry C.M."/>
            <person name="Lippert R."/>
            <person name="Walenz B."/>
            <person name="Shatkay H."/>
            <person name="Dew I."/>
            <person name="Miller J.R."/>
            <person name="Flanigan M.J."/>
            <person name="Edwards N.J."/>
            <person name="Bolanos R."/>
            <person name="Fasulo D."/>
            <person name="Halldorsson B.V."/>
            <person name="Hannenhalli S."/>
            <person name="Turner R."/>
            <person name="Yooseph S."/>
            <person name="Lu F."/>
            <person name="Nusskern D.R."/>
            <person name="Shue B.C."/>
            <person name="Zheng X.H."/>
            <person name="Zhong F."/>
            <person name="Delcher A.L."/>
            <person name="Huson D.H."/>
            <person name="Kravitz S.A."/>
            <person name="Mouchard L."/>
            <person name="Reinert K."/>
            <person name="Remington K.A."/>
            <person name="Clark A.G."/>
            <person name="Waterman M.S."/>
            <person name="Eichler E.E."/>
            <person name="Adams M.D."/>
            <person name="Hunkapiller M.W."/>
            <person name="Myers E.W."/>
            <person name="Venter J.C."/>
        </authorList>
    </citation>
    <scope>NUCLEOTIDE SEQUENCE [LARGE SCALE GENOMIC DNA]</scope>
</reference>
<reference key="5">
    <citation type="journal article" date="2004" name="Genome Res.">
        <title>The status, quality, and expansion of the NIH full-length cDNA project: the Mammalian Gene Collection (MGC).</title>
        <authorList>
            <consortium name="The MGC Project Team"/>
        </authorList>
    </citation>
    <scope>NUCLEOTIDE SEQUENCE [LARGE SCALE MRNA]</scope>
    <source>
        <tissue>Testis</tissue>
    </source>
</reference>
<reference key="6">
    <citation type="journal article" date="1997" name="J. Biol. Chem.">
        <title>Rad and Rad-related GTPases interact with calmodulin and calmodulin-dependent protein kinase II.</title>
        <authorList>
            <person name="Moyers J.S."/>
            <person name="Bilan P.J."/>
            <person name="Zhu J."/>
            <person name="Kahn C.R."/>
        </authorList>
    </citation>
    <scope>INTERACTION WITH CALMODULIN</scope>
</reference>
<reference key="7">
    <citation type="journal article" date="2002" name="J. Cell Biol.">
        <title>The GTP binding proteins Gem and Rad are negative regulators of the Rho-Rho kinase pathway.</title>
        <authorList>
            <person name="Ward Y."/>
            <person name="Yap S.-F."/>
            <person name="Ravichandran V."/>
            <person name="Matsumura F."/>
            <person name="Ito M."/>
            <person name="Spinelli B."/>
            <person name="Kelly K."/>
        </authorList>
    </citation>
    <scope>INTERACTION WITH ROCK1</scope>
</reference>
<dbReference type="EMBL" id="U10550">
    <property type="protein sequence ID" value="AAA64911.1"/>
    <property type="molecule type" value="mRNA"/>
</dbReference>
<dbReference type="EMBL" id="U13052">
    <property type="protein sequence ID" value="AAC50067.1"/>
    <property type="molecule type" value="mRNA"/>
</dbReference>
<dbReference type="EMBL" id="AK314017">
    <property type="protein sequence ID" value="BAG36728.1"/>
    <property type="molecule type" value="mRNA"/>
</dbReference>
<dbReference type="EMBL" id="CH471060">
    <property type="protein sequence ID" value="EAW91709.1"/>
    <property type="molecule type" value="Genomic_DNA"/>
</dbReference>
<dbReference type="EMBL" id="BC022010">
    <property type="protein sequence ID" value="AAH22010.1"/>
    <property type="molecule type" value="mRNA"/>
</dbReference>
<dbReference type="CCDS" id="CCDS6261.1"/>
<dbReference type="PIR" id="A54575">
    <property type="entry name" value="A54575"/>
</dbReference>
<dbReference type="PIR" id="I38745">
    <property type="entry name" value="I38745"/>
</dbReference>
<dbReference type="RefSeq" id="NP_005252.1">
    <property type="nucleotide sequence ID" value="NM_005261.4"/>
</dbReference>
<dbReference type="RefSeq" id="NP_859053.1">
    <property type="nucleotide sequence ID" value="NM_181702.3"/>
</dbReference>
<dbReference type="PDB" id="2CJW">
    <property type="method" value="X-ray"/>
    <property type="resolution" value="2.10 A"/>
    <property type="chains" value="A/B=74-261"/>
</dbReference>
<dbReference type="PDB" id="2G3Y">
    <property type="method" value="X-ray"/>
    <property type="resolution" value="2.40 A"/>
    <property type="chains" value="A=62-249"/>
</dbReference>
<dbReference type="PDB" id="2HT6">
    <property type="method" value="X-ray"/>
    <property type="resolution" value="2.40 A"/>
    <property type="chains" value="A/B=71-243"/>
</dbReference>
<dbReference type="PDBsum" id="2CJW"/>
<dbReference type="PDBsum" id="2G3Y"/>
<dbReference type="PDBsum" id="2HT6"/>
<dbReference type="SMR" id="P55040"/>
<dbReference type="BioGRID" id="108937">
    <property type="interactions" value="148"/>
</dbReference>
<dbReference type="DIP" id="DIP-41587N"/>
<dbReference type="FunCoup" id="P55040">
    <property type="interactions" value="393"/>
</dbReference>
<dbReference type="IntAct" id="P55040">
    <property type="interactions" value="148"/>
</dbReference>
<dbReference type="MINT" id="P55040"/>
<dbReference type="STRING" id="9606.ENSP00000297596"/>
<dbReference type="iPTMnet" id="P55040"/>
<dbReference type="PhosphoSitePlus" id="P55040"/>
<dbReference type="BioMuta" id="GEM"/>
<dbReference type="DMDM" id="1707896"/>
<dbReference type="jPOST" id="P55040"/>
<dbReference type="MassIVE" id="P55040"/>
<dbReference type="PaxDb" id="9606-ENSP00000297596"/>
<dbReference type="PeptideAtlas" id="P55040"/>
<dbReference type="ProteomicsDB" id="56765"/>
<dbReference type="Antibodypedia" id="12852">
    <property type="antibodies" value="176 antibodies from 33 providers"/>
</dbReference>
<dbReference type="DNASU" id="2669"/>
<dbReference type="Ensembl" id="ENST00000297596.3">
    <property type="protein sequence ID" value="ENSP00000297596.2"/>
    <property type="gene ID" value="ENSG00000164949.8"/>
</dbReference>
<dbReference type="Ensembl" id="ENST00000396194.6">
    <property type="protein sequence ID" value="ENSP00000379497.2"/>
    <property type="gene ID" value="ENSG00000164949.8"/>
</dbReference>
<dbReference type="GeneID" id="2669"/>
<dbReference type="KEGG" id="hsa:2669"/>
<dbReference type="MANE-Select" id="ENST00000297596.3">
    <property type="protein sequence ID" value="ENSP00000297596.2"/>
    <property type="RefSeq nucleotide sequence ID" value="NM_005261.4"/>
    <property type="RefSeq protein sequence ID" value="NP_005252.1"/>
</dbReference>
<dbReference type="UCSC" id="uc003ygi.4">
    <property type="organism name" value="human"/>
</dbReference>
<dbReference type="AGR" id="HGNC:4234"/>
<dbReference type="CTD" id="2669"/>
<dbReference type="DisGeNET" id="2669"/>
<dbReference type="GeneCards" id="GEM"/>
<dbReference type="HGNC" id="HGNC:4234">
    <property type="gene designation" value="GEM"/>
</dbReference>
<dbReference type="HPA" id="ENSG00000164949">
    <property type="expression patterns" value="Tissue enhanced (gallbladder)"/>
</dbReference>
<dbReference type="MIM" id="600164">
    <property type="type" value="gene"/>
</dbReference>
<dbReference type="neXtProt" id="NX_P55040"/>
<dbReference type="OpenTargets" id="ENSG00000164949"/>
<dbReference type="PharmGKB" id="PA28645"/>
<dbReference type="VEuPathDB" id="HostDB:ENSG00000164949"/>
<dbReference type="eggNOG" id="KOG0395">
    <property type="taxonomic scope" value="Eukaryota"/>
</dbReference>
<dbReference type="GeneTree" id="ENSGT00940000157830"/>
<dbReference type="HOGENOM" id="CLU_041217_3_2_1"/>
<dbReference type="InParanoid" id="P55040"/>
<dbReference type="OMA" id="IRDHCMQ"/>
<dbReference type="OrthoDB" id="5239715at2759"/>
<dbReference type="PAN-GO" id="P55040">
    <property type="GO annotations" value="3 GO annotations based on evolutionary models"/>
</dbReference>
<dbReference type="PhylomeDB" id="P55040"/>
<dbReference type="TreeFam" id="TF314379"/>
<dbReference type="PathwayCommons" id="P55040"/>
<dbReference type="Reactome" id="R-HSA-9768919">
    <property type="pathway name" value="NPAS4 regulates expression of target genes"/>
</dbReference>
<dbReference type="SignaLink" id="P55040"/>
<dbReference type="SIGNOR" id="P55040"/>
<dbReference type="BioGRID-ORCS" id="2669">
    <property type="hits" value="12 hits in 1156 CRISPR screens"/>
</dbReference>
<dbReference type="ChiTaRS" id="GEM">
    <property type="organism name" value="human"/>
</dbReference>
<dbReference type="EvolutionaryTrace" id="P55040"/>
<dbReference type="GeneWiki" id="GEM_(gene)"/>
<dbReference type="GenomeRNAi" id="2669"/>
<dbReference type="Pharos" id="P55040">
    <property type="development level" value="Tbio"/>
</dbReference>
<dbReference type="PRO" id="PR:P55040"/>
<dbReference type="Proteomes" id="UP000005640">
    <property type="component" value="Chromosome 8"/>
</dbReference>
<dbReference type="RNAct" id="P55040">
    <property type="molecule type" value="protein"/>
</dbReference>
<dbReference type="Bgee" id="ENSG00000164949">
    <property type="expression patterns" value="Expressed in pigmented layer of retina and 189 other cell types or tissues"/>
</dbReference>
<dbReference type="ExpressionAtlas" id="P55040">
    <property type="expression patterns" value="baseline and differential"/>
</dbReference>
<dbReference type="GO" id="GO:0009898">
    <property type="term" value="C:cytoplasmic side of plasma membrane"/>
    <property type="evidence" value="ECO:0000314"/>
    <property type="project" value="BHF-UCL"/>
</dbReference>
<dbReference type="GO" id="GO:0030496">
    <property type="term" value="C:midbody"/>
    <property type="evidence" value="ECO:0000314"/>
    <property type="project" value="UniProtKB"/>
</dbReference>
<dbReference type="GO" id="GO:0072686">
    <property type="term" value="C:mitotic spindle"/>
    <property type="evidence" value="ECO:0000314"/>
    <property type="project" value="UniProtKB"/>
</dbReference>
<dbReference type="GO" id="GO:0005634">
    <property type="term" value="C:nucleus"/>
    <property type="evidence" value="ECO:0007669"/>
    <property type="project" value="Ensembl"/>
</dbReference>
<dbReference type="GO" id="GO:0005886">
    <property type="term" value="C:plasma membrane"/>
    <property type="evidence" value="ECO:0000318"/>
    <property type="project" value="GO_Central"/>
</dbReference>
<dbReference type="GO" id="GO:0051233">
    <property type="term" value="C:spindle midzone"/>
    <property type="evidence" value="ECO:0000314"/>
    <property type="project" value="UniProtKB"/>
</dbReference>
<dbReference type="GO" id="GO:0005246">
    <property type="term" value="F:calcium channel regulator activity"/>
    <property type="evidence" value="ECO:0000318"/>
    <property type="project" value="GO_Central"/>
</dbReference>
<dbReference type="GO" id="GO:0005516">
    <property type="term" value="F:calmodulin binding"/>
    <property type="evidence" value="ECO:0007669"/>
    <property type="project" value="UniProtKB-KW"/>
</dbReference>
<dbReference type="GO" id="GO:0019003">
    <property type="term" value="F:GDP binding"/>
    <property type="evidence" value="ECO:0000314"/>
    <property type="project" value="BHF-UCL"/>
</dbReference>
<dbReference type="GO" id="GO:0005525">
    <property type="term" value="F:GTP binding"/>
    <property type="evidence" value="ECO:0000314"/>
    <property type="project" value="BHF-UCL"/>
</dbReference>
<dbReference type="GO" id="GO:0003924">
    <property type="term" value="F:GTPase activity"/>
    <property type="evidence" value="ECO:0000314"/>
    <property type="project" value="BHF-UCL"/>
</dbReference>
<dbReference type="GO" id="GO:0000287">
    <property type="term" value="F:magnesium ion binding"/>
    <property type="evidence" value="ECO:0000314"/>
    <property type="project" value="BHF-UCL"/>
</dbReference>
<dbReference type="GO" id="GO:0007166">
    <property type="term" value="P:cell surface receptor signaling pathway"/>
    <property type="evidence" value="ECO:0000304"/>
    <property type="project" value="ProtInc"/>
</dbReference>
<dbReference type="GO" id="GO:0051276">
    <property type="term" value="P:chromosome organization"/>
    <property type="evidence" value="ECO:0000315"/>
    <property type="project" value="UniProtKB"/>
</dbReference>
<dbReference type="GO" id="GO:0006955">
    <property type="term" value="P:immune response"/>
    <property type="evidence" value="ECO:0000304"/>
    <property type="project" value="ProtInc"/>
</dbReference>
<dbReference type="GO" id="GO:0051310">
    <property type="term" value="P:metaphase chromosome alignment"/>
    <property type="evidence" value="ECO:0000315"/>
    <property type="project" value="UniProtKB"/>
</dbReference>
<dbReference type="GO" id="GO:0000278">
    <property type="term" value="P:mitotic cell cycle"/>
    <property type="evidence" value="ECO:0000315"/>
    <property type="project" value="UniProtKB"/>
</dbReference>
<dbReference type="GO" id="GO:0007165">
    <property type="term" value="P:signal transduction"/>
    <property type="evidence" value="ECO:0000304"/>
    <property type="project" value="ProtInc"/>
</dbReference>
<dbReference type="CDD" id="cd04148">
    <property type="entry name" value="RGK"/>
    <property type="match status" value="1"/>
</dbReference>
<dbReference type="FunFam" id="3.40.50.300:FF:000311">
    <property type="entry name" value="GTP-binding protein RAD"/>
    <property type="match status" value="1"/>
</dbReference>
<dbReference type="Gene3D" id="3.40.50.300">
    <property type="entry name" value="P-loop containing nucleotide triphosphate hydrolases"/>
    <property type="match status" value="1"/>
</dbReference>
<dbReference type="InterPro" id="IPR027417">
    <property type="entry name" value="P-loop_NTPase"/>
</dbReference>
<dbReference type="InterPro" id="IPR017358">
    <property type="entry name" value="RGK"/>
</dbReference>
<dbReference type="InterPro" id="IPR051641">
    <property type="entry name" value="RGK_GTP-binding_reg"/>
</dbReference>
<dbReference type="InterPro" id="IPR005225">
    <property type="entry name" value="Small_GTP-bd"/>
</dbReference>
<dbReference type="InterPro" id="IPR001806">
    <property type="entry name" value="Small_GTPase"/>
</dbReference>
<dbReference type="NCBIfam" id="TIGR00231">
    <property type="entry name" value="small_GTP"/>
    <property type="match status" value="1"/>
</dbReference>
<dbReference type="PANTHER" id="PTHR45775:SF4">
    <property type="entry name" value="GTP-BINDING PROTEIN GEM"/>
    <property type="match status" value="1"/>
</dbReference>
<dbReference type="PANTHER" id="PTHR45775">
    <property type="entry name" value="RAD, GEM/KIR FAMILY MEMBER 2, ISOFORM C"/>
    <property type="match status" value="1"/>
</dbReference>
<dbReference type="Pfam" id="PF00071">
    <property type="entry name" value="Ras"/>
    <property type="match status" value="1"/>
</dbReference>
<dbReference type="PIRSF" id="PIRSF038017">
    <property type="entry name" value="GTP-binding_GEM"/>
    <property type="match status" value="1"/>
</dbReference>
<dbReference type="PRINTS" id="PR00449">
    <property type="entry name" value="RASTRNSFRMNG"/>
</dbReference>
<dbReference type="SMART" id="SM00175">
    <property type="entry name" value="RAB"/>
    <property type="match status" value="1"/>
</dbReference>
<dbReference type="SMART" id="SM00173">
    <property type="entry name" value="RAS"/>
    <property type="match status" value="1"/>
</dbReference>
<dbReference type="SMART" id="SM00174">
    <property type="entry name" value="RHO"/>
    <property type="match status" value="1"/>
</dbReference>
<dbReference type="SUPFAM" id="SSF52540">
    <property type="entry name" value="P-loop containing nucleoside triphosphate hydrolases"/>
    <property type="match status" value="1"/>
</dbReference>
<dbReference type="PROSITE" id="PS51421">
    <property type="entry name" value="RAS"/>
    <property type="match status" value="1"/>
</dbReference>
<evidence type="ECO:0000250" key="1"/>
<evidence type="ECO:0000256" key="2">
    <source>
        <dbReference type="SAM" id="MobiDB-lite"/>
    </source>
</evidence>
<evidence type="ECO:0000269" key="3">
    <source>
    </source>
</evidence>
<evidence type="ECO:0000269" key="4">
    <source>
    </source>
</evidence>
<evidence type="ECO:0000305" key="5"/>
<evidence type="ECO:0007829" key="6">
    <source>
        <dbReference type="PDB" id="2CJW"/>
    </source>
</evidence>
<evidence type="ECO:0007829" key="7">
    <source>
        <dbReference type="PDB" id="2G3Y"/>
    </source>
</evidence>
<accession>P55040</accession>
<accession>B2RA31</accession>
<gene>
    <name type="primary">GEM</name>
    <name type="synonym">KIR</name>
</gene>
<name>GEM_HUMAN</name>
<protein>
    <recommendedName>
        <fullName>GTP-binding protein GEM</fullName>
    </recommendedName>
    <alternativeName>
        <fullName>GTP-binding mitogen-induced T-cell protein</fullName>
    </alternativeName>
    <alternativeName>
        <fullName>RAS-like protein KIR</fullName>
    </alternativeName>
</protein>
<keyword id="KW-0002">3D-structure</keyword>
<keyword id="KW-0112">Calmodulin-binding</keyword>
<keyword id="KW-1003">Cell membrane</keyword>
<keyword id="KW-0342">GTP-binding</keyword>
<keyword id="KW-0472">Membrane</keyword>
<keyword id="KW-0547">Nucleotide-binding</keyword>
<keyword id="KW-0597">Phosphoprotein</keyword>
<keyword id="KW-1267">Proteomics identification</keyword>
<keyword id="KW-1185">Reference proteome</keyword>
<feature type="chain" id="PRO_0000122475" description="GTP-binding protein GEM">
    <location>
        <begin position="1"/>
        <end position="296"/>
    </location>
</feature>
<feature type="region of interest" description="Disordered" evidence="2">
    <location>
        <begin position="1"/>
        <end position="20"/>
    </location>
</feature>
<feature type="region of interest" description="Disordered" evidence="2">
    <location>
        <begin position="37"/>
        <end position="68"/>
    </location>
</feature>
<feature type="region of interest" description="Calmodulin-binding" evidence="1">
    <location>
        <begin position="266"/>
        <end position="285"/>
    </location>
</feature>
<feature type="compositionally biased region" description="Low complexity" evidence="2">
    <location>
        <begin position="57"/>
        <end position="68"/>
    </location>
</feature>
<feature type="binding site" evidence="1">
    <location>
        <begin position="82"/>
        <end position="89"/>
    </location>
    <ligand>
        <name>GTP</name>
        <dbReference type="ChEBI" id="CHEBI:37565"/>
    </ligand>
</feature>
<feature type="binding site" evidence="1">
    <location>
        <begin position="191"/>
        <end position="194"/>
    </location>
    <ligand>
        <name>GTP</name>
        <dbReference type="ChEBI" id="CHEBI:37565"/>
    </ligand>
</feature>
<feature type="sequence variant" id="VAR_020097" description="In dbSNP:rs2170363.">
    <original>R</original>
    <variation>G</variation>
    <location>
        <position position="43"/>
    </location>
</feature>
<feature type="sequence conflict" description="In Ref. 2; AAC50067." evidence="5" ref="2">
    <original>I</original>
    <variation>V</variation>
    <location>
        <position position="159"/>
    </location>
</feature>
<feature type="sequence conflict" description="In Ref. 2; AAC50067." evidence="5" ref="2">
    <original>QL</original>
    <variation>HV</variation>
    <location>
        <begin position="174"/>
        <end position="175"/>
    </location>
</feature>
<feature type="strand" evidence="6">
    <location>
        <begin position="75"/>
        <end position="81"/>
    </location>
</feature>
<feature type="helix" evidence="6">
    <location>
        <begin position="88"/>
        <end position="98"/>
    </location>
</feature>
<feature type="helix" evidence="6">
    <location>
        <begin position="107"/>
        <end position="109"/>
    </location>
</feature>
<feature type="strand" evidence="6">
    <location>
        <begin position="113"/>
        <end position="120"/>
    </location>
</feature>
<feature type="strand" evidence="6">
    <location>
        <begin position="123"/>
        <end position="130"/>
    </location>
</feature>
<feature type="turn" evidence="7">
    <location>
        <begin position="133"/>
        <end position="136"/>
    </location>
</feature>
<feature type="helix" evidence="6">
    <location>
        <begin position="143"/>
        <end position="145"/>
    </location>
</feature>
<feature type="helix" evidence="6">
    <location>
        <begin position="146"/>
        <end position="149"/>
    </location>
</feature>
<feature type="strand" evidence="6">
    <location>
        <begin position="151"/>
        <end position="158"/>
    </location>
</feature>
<feature type="helix" evidence="6">
    <location>
        <begin position="162"/>
        <end position="178"/>
    </location>
</feature>
<feature type="turn" evidence="6">
    <location>
        <begin position="179"/>
        <end position="181"/>
    </location>
</feature>
<feature type="strand" evidence="6">
    <location>
        <begin position="186"/>
        <end position="191"/>
    </location>
</feature>
<feature type="helix" evidence="6">
    <location>
        <begin position="196"/>
        <end position="198"/>
    </location>
</feature>
<feature type="helix" evidence="6">
    <location>
        <begin position="203"/>
        <end position="212"/>
    </location>
</feature>
<feature type="strand" evidence="6">
    <location>
        <begin position="216"/>
        <end position="219"/>
    </location>
</feature>
<feature type="turn" evidence="6">
    <location>
        <begin position="222"/>
        <end position="225"/>
    </location>
</feature>
<feature type="helix" evidence="6">
    <location>
        <begin position="228"/>
        <end position="243"/>
    </location>
</feature>
<feature type="helix" evidence="6">
    <location>
        <begin position="246"/>
        <end position="257"/>
    </location>
</feature>
<sequence>MTLNNVTMRQGTVGMQPQQQRWSIPADGRHLMVQKEPHQYSHRNRHSATPEDHCRRSWSSDSTDSVISSESGNTYYRVVLIGEQGVGKSTLANIFAGVHDSMDSDCEVLGEDTYERTLMVDGESATIILLDMWENKGENEWLHDHCMQVGDAYLIVYSITDRASFEKASELRIQLRRARQTEDIPIILVGNKSDLVRCREVSVSEGRACAVVFDCKFIETSAAVQHNVKELFEGIVRQVRLRRDSKEKNERRLAYQKRKESMPRKARRFWGKIVAKNNKNMAFKLKSKSCHDLSVL</sequence>
<proteinExistence type="evidence at protein level"/>